<protein>
    <recommendedName>
        <fullName>DNA polymerase</fullName>
        <ecNumber>2.7.7.7</ecNumber>
    </recommendedName>
    <alternativeName>
        <fullName>TO POL</fullName>
    </alternativeName>
</protein>
<evidence type="ECO:0000269" key="1">
    <source>
    </source>
</evidence>
<evidence type="ECO:0000269" key="2">
    <source>
    </source>
</evidence>
<evidence type="ECO:0000269" key="3">
    <source>
    </source>
</evidence>
<evidence type="ECO:0000305" key="4"/>
<evidence type="ECO:0007744" key="5">
    <source>
        <dbReference type="PDB" id="1TGO"/>
    </source>
</evidence>
<evidence type="ECO:0007744" key="6">
    <source>
        <dbReference type="PDB" id="2VWK"/>
    </source>
</evidence>
<evidence type="ECO:0007744" key="7">
    <source>
        <dbReference type="PDB" id="2XHB"/>
    </source>
</evidence>
<evidence type="ECO:0007829" key="8">
    <source>
        <dbReference type="PDB" id="1TGO"/>
    </source>
</evidence>
<evidence type="ECO:0007829" key="9">
    <source>
        <dbReference type="PDB" id="2VWK"/>
    </source>
</evidence>
<evidence type="ECO:0007829" key="10">
    <source>
        <dbReference type="PDB" id="2XHB"/>
    </source>
</evidence>
<evidence type="ECO:0007829" key="11">
    <source>
        <dbReference type="PDB" id="7B06"/>
    </source>
</evidence>
<evidence type="ECO:0007829" key="12">
    <source>
        <dbReference type="PDB" id="7B08"/>
    </source>
</evidence>
<evidence type="ECO:0007829" key="13">
    <source>
        <dbReference type="PDB" id="9GP8"/>
    </source>
</evidence>
<keyword id="KW-0002">3D-structure</keyword>
<keyword id="KW-1015">Disulfide bond</keyword>
<keyword id="KW-0235">DNA replication</keyword>
<keyword id="KW-0238">DNA-binding</keyword>
<keyword id="KW-0239">DNA-directed DNA polymerase</keyword>
<keyword id="KW-0269">Exonuclease</keyword>
<keyword id="KW-0378">Hydrolase</keyword>
<keyword id="KW-0511">Multifunctional enzyme</keyword>
<keyword id="KW-0540">Nuclease</keyword>
<keyword id="KW-0548">Nucleotidyltransferase</keyword>
<keyword id="KW-0808">Transferase</keyword>
<organism>
    <name type="scientific">Thermococcus gorgonarius</name>
    <dbReference type="NCBI Taxonomy" id="71997"/>
    <lineage>
        <taxon>Archaea</taxon>
        <taxon>Methanobacteriati</taxon>
        <taxon>Methanobacteriota</taxon>
        <taxon>Thermococci</taxon>
        <taxon>Thermococcales</taxon>
        <taxon>Thermococcaceae</taxon>
        <taxon>Thermococcus</taxon>
    </lineage>
</organism>
<reference key="1">
    <citation type="journal article" date="1999" name="Proc. Natl. Acad. Sci. U.S.A.">
        <title>Crystal structure of a thermostable type B DNA polymerase from Thermococcus gorgonarius.</title>
        <authorList>
            <person name="Hopfner K.-P."/>
            <person name="Eichinger A."/>
            <person name="Engh R.A."/>
            <person name="Laue F."/>
            <person name="Ankenbauer W."/>
            <person name="Huber R."/>
            <person name="Angerer B."/>
        </authorList>
    </citation>
    <scope>X-RAY CRYSTALLOGRAPHY (2.5 ANGSTROMS)</scope>
    <scope>DISULFIDE BONDS</scope>
</reference>
<reference key="2">
    <citation type="journal article" date="2008" name="J. Mol. Biol.">
        <title>Uracil recognition in archaeal DNA polymerases captured by X-ray crystallography.</title>
        <authorList>
            <person name="Firbank S.J."/>
            <person name="Wardle J."/>
            <person name="Heslop P."/>
            <person name="Lewis R.J."/>
            <person name="Connolly B.A."/>
        </authorList>
    </citation>
    <scope>X-RAY CRYSTALLOGRAPHY (2.60 ANGSTROMS)</scope>
    <scope>DISULFIDE BONDS</scope>
</reference>
<reference key="3">
    <citation type="journal article" date="2010" name="Biochemistry">
        <title>Probing the interaction of archaeal DNA polymerases with deaminated bases using X-ray crystallography and non-hydrogen bonding isosteric base analogues.</title>
        <authorList>
            <person name="Killelea T."/>
            <person name="Ghosh S."/>
            <person name="Tan S.S."/>
            <person name="Heslop P."/>
            <person name="Firbank S.J."/>
            <person name="Kool E.T."/>
            <person name="Connolly B.A."/>
        </authorList>
    </citation>
    <scope>X-RAY CRYSTALLOGRAPHY (2.72 ANGSTROMS) OF 1-757</scope>
    <scope>DISULFIDE BONDS</scope>
</reference>
<dbReference type="EC" id="2.7.7.7"/>
<dbReference type="RefSeq" id="WP_088885078.1">
    <property type="nucleotide sequence ID" value="NZ_CP014855.1"/>
</dbReference>
<dbReference type="PDB" id="1TGO">
    <property type="method" value="X-ray"/>
    <property type="resolution" value="2.50 A"/>
    <property type="chains" value="A=1-773"/>
</dbReference>
<dbReference type="PDB" id="2VWJ">
    <property type="method" value="X-ray"/>
    <property type="resolution" value="2.78 A"/>
    <property type="chains" value="A=1-773"/>
</dbReference>
<dbReference type="PDB" id="2VWK">
    <property type="method" value="X-ray"/>
    <property type="resolution" value="2.60 A"/>
    <property type="chains" value="A=1-773"/>
</dbReference>
<dbReference type="PDB" id="2XHB">
    <property type="method" value="X-ray"/>
    <property type="resolution" value="2.72 A"/>
    <property type="chains" value="A=1-773"/>
</dbReference>
<dbReference type="PDB" id="7B06">
    <property type="method" value="X-ray"/>
    <property type="resolution" value="2.35 A"/>
    <property type="chains" value="A=1-773"/>
</dbReference>
<dbReference type="PDB" id="7B07">
    <property type="method" value="X-ray"/>
    <property type="resolution" value="3.10 A"/>
    <property type="chains" value="A=1-773"/>
</dbReference>
<dbReference type="PDB" id="7B08">
    <property type="method" value="X-ray"/>
    <property type="resolution" value="2.39 A"/>
    <property type="chains" value="A=1-773"/>
</dbReference>
<dbReference type="PDB" id="7B0F">
    <property type="method" value="X-ray"/>
    <property type="resolution" value="2.80 A"/>
    <property type="chains" value="A=1-773"/>
</dbReference>
<dbReference type="PDB" id="7B0G">
    <property type="method" value="X-ray"/>
    <property type="resolution" value="3.00 A"/>
    <property type="chains" value="A=1-773"/>
</dbReference>
<dbReference type="PDB" id="7B0H">
    <property type="method" value="X-ray"/>
    <property type="resolution" value="3.15 A"/>
    <property type="chains" value="E/F=1-773"/>
</dbReference>
<dbReference type="PDB" id="9GP8">
    <property type="method" value="X-ray"/>
    <property type="resolution" value="2.18 A"/>
    <property type="chains" value="A=1-773"/>
</dbReference>
<dbReference type="PDBsum" id="1TGO"/>
<dbReference type="PDBsum" id="2VWJ"/>
<dbReference type="PDBsum" id="2VWK"/>
<dbReference type="PDBsum" id="2XHB"/>
<dbReference type="PDBsum" id="7B06"/>
<dbReference type="PDBsum" id="7B07"/>
<dbReference type="PDBsum" id="7B08"/>
<dbReference type="PDBsum" id="7B0F"/>
<dbReference type="PDBsum" id="7B0G"/>
<dbReference type="PDBsum" id="7B0H"/>
<dbReference type="PDBsum" id="9GP8"/>
<dbReference type="SMR" id="P56689"/>
<dbReference type="GeneID" id="33331729"/>
<dbReference type="OrthoDB" id="323192at2157"/>
<dbReference type="BRENDA" id="2.7.7.7">
    <property type="organism ID" value="13310"/>
</dbReference>
<dbReference type="EvolutionaryTrace" id="P56689"/>
<dbReference type="GO" id="GO:0003677">
    <property type="term" value="F:DNA binding"/>
    <property type="evidence" value="ECO:0007669"/>
    <property type="project" value="UniProtKB-KW"/>
</dbReference>
<dbReference type="GO" id="GO:0003887">
    <property type="term" value="F:DNA-directed DNA polymerase activity"/>
    <property type="evidence" value="ECO:0007669"/>
    <property type="project" value="UniProtKB-KW"/>
</dbReference>
<dbReference type="GO" id="GO:0004527">
    <property type="term" value="F:exonuclease activity"/>
    <property type="evidence" value="ECO:0007669"/>
    <property type="project" value="UniProtKB-KW"/>
</dbReference>
<dbReference type="GO" id="GO:0000166">
    <property type="term" value="F:nucleotide binding"/>
    <property type="evidence" value="ECO:0007669"/>
    <property type="project" value="InterPro"/>
</dbReference>
<dbReference type="GO" id="GO:0006261">
    <property type="term" value="P:DNA-templated DNA replication"/>
    <property type="evidence" value="ECO:0007669"/>
    <property type="project" value="TreeGrafter"/>
</dbReference>
<dbReference type="CDD" id="cd05780">
    <property type="entry name" value="DNA_polB_Kod1_like_exo"/>
    <property type="match status" value="1"/>
</dbReference>
<dbReference type="CDD" id="cd05536">
    <property type="entry name" value="POLBc_B3"/>
    <property type="match status" value="1"/>
</dbReference>
<dbReference type="FunFam" id="3.30.342.10:FF:000015">
    <property type="entry name" value="DNA polymerase"/>
    <property type="match status" value="1"/>
</dbReference>
<dbReference type="FunFam" id="1.10.132.60:FF:000013">
    <property type="entry name" value="DNA polymerase Pol2"/>
    <property type="match status" value="1"/>
</dbReference>
<dbReference type="Gene3D" id="1.10.132.60">
    <property type="entry name" value="DNA polymerase family B, C-terminal domain"/>
    <property type="match status" value="1"/>
</dbReference>
<dbReference type="Gene3D" id="3.30.342.10">
    <property type="entry name" value="DNA Polymerase, chain B, domain 1"/>
    <property type="match status" value="1"/>
</dbReference>
<dbReference type="Gene3D" id="1.10.287.690">
    <property type="entry name" value="Helix hairpin bin"/>
    <property type="match status" value="1"/>
</dbReference>
<dbReference type="Gene3D" id="3.90.1600.10">
    <property type="entry name" value="Palm domain of DNA polymerase"/>
    <property type="match status" value="1"/>
</dbReference>
<dbReference type="Gene3D" id="3.30.420.10">
    <property type="entry name" value="Ribonuclease H-like superfamily/Ribonuclease H"/>
    <property type="match status" value="1"/>
</dbReference>
<dbReference type="InterPro" id="IPR006172">
    <property type="entry name" value="DNA-dir_DNA_pol_B"/>
</dbReference>
<dbReference type="InterPro" id="IPR017964">
    <property type="entry name" value="DNA-dir_DNA_pol_B_CS"/>
</dbReference>
<dbReference type="InterPro" id="IPR006133">
    <property type="entry name" value="DNA-dir_DNA_pol_B_exonuc"/>
</dbReference>
<dbReference type="InterPro" id="IPR006134">
    <property type="entry name" value="DNA-dir_DNA_pol_B_multi_dom"/>
</dbReference>
<dbReference type="InterPro" id="IPR043502">
    <property type="entry name" value="DNA/RNA_pol_sf"/>
</dbReference>
<dbReference type="InterPro" id="IPR042087">
    <property type="entry name" value="DNA_pol_B_thumb"/>
</dbReference>
<dbReference type="InterPro" id="IPR023211">
    <property type="entry name" value="DNA_pol_palm_dom_sf"/>
</dbReference>
<dbReference type="InterPro" id="IPR050240">
    <property type="entry name" value="DNA_pol_type-B"/>
</dbReference>
<dbReference type="InterPro" id="IPR012337">
    <property type="entry name" value="RNaseH-like_sf"/>
</dbReference>
<dbReference type="InterPro" id="IPR036397">
    <property type="entry name" value="RNaseH_sf"/>
</dbReference>
<dbReference type="NCBIfam" id="TIGR00592">
    <property type="entry name" value="pol2"/>
    <property type="match status" value="2"/>
</dbReference>
<dbReference type="PANTHER" id="PTHR10322">
    <property type="entry name" value="DNA POLYMERASE CATALYTIC SUBUNIT"/>
    <property type="match status" value="1"/>
</dbReference>
<dbReference type="PANTHER" id="PTHR10322:SF23">
    <property type="entry name" value="DNA POLYMERASE DELTA CATALYTIC SUBUNIT"/>
    <property type="match status" value="1"/>
</dbReference>
<dbReference type="Pfam" id="PF00136">
    <property type="entry name" value="DNA_pol_B"/>
    <property type="match status" value="1"/>
</dbReference>
<dbReference type="Pfam" id="PF03104">
    <property type="entry name" value="DNA_pol_B_exo1"/>
    <property type="match status" value="1"/>
</dbReference>
<dbReference type="PRINTS" id="PR00106">
    <property type="entry name" value="DNAPOLB"/>
</dbReference>
<dbReference type="SMART" id="SM00486">
    <property type="entry name" value="POLBc"/>
    <property type="match status" value="1"/>
</dbReference>
<dbReference type="SUPFAM" id="SSF56672">
    <property type="entry name" value="DNA/RNA polymerases"/>
    <property type="match status" value="1"/>
</dbReference>
<dbReference type="SUPFAM" id="SSF53098">
    <property type="entry name" value="Ribonuclease H-like"/>
    <property type="match status" value="1"/>
</dbReference>
<dbReference type="PROSITE" id="PS00116">
    <property type="entry name" value="DNA_POLYMERASE_B"/>
    <property type="match status" value="1"/>
</dbReference>
<feature type="chain" id="PRO_0000046488" description="DNA polymerase">
    <location>
        <begin position="1"/>
        <end position="773"/>
    </location>
</feature>
<feature type="disulfide bond" evidence="1 2 5 6">
    <location>
        <begin position="428"/>
        <end position="442"/>
    </location>
</feature>
<feature type="disulfide bond" evidence="2 3 6 7">
    <location>
        <begin position="506"/>
        <end position="509"/>
    </location>
</feature>
<feature type="strand" evidence="13">
    <location>
        <begin position="2"/>
        <end position="10"/>
    </location>
</feature>
<feature type="strand" evidence="13">
    <location>
        <begin position="13"/>
        <end position="22"/>
    </location>
</feature>
<feature type="strand" evidence="13">
    <location>
        <begin position="25"/>
        <end position="32"/>
    </location>
</feature>
<feature type="strand" evidence="13">
    <location>
        <begin position="37"/>
        <end position="44"/>
    </location>
</feature>
<feature type="helix" evidence="13">
    <location>
        <begin position="45"/>
        <end position="47"/>
    </location>
</feature>
<feature type="helix" evidence="13">
    <location>
        <begin position="48"/>
        <end position="53"/>
    </location>
</feature>
<feature type="strand" evidence="11">
    <location>
        <begin position="56"/>
        <end position="58"/>
    </location>
</feature>
<feature type="strand" evidence="11">
    <location>
        <begin position="61"/>
        <end position="63"/>
    </location>
</feature>
<feature type="strand" evidence="13">
    <location>
        <begin position="67"/>
        <end position="75"/>
    </location>
</feature>
<feature type="strand" evidence="13">
    <location>
        <begin position="78"/>
        <end position="86"/>
    </location>
</feature>
<feature type="helix" evidence="13">
    <location>
        <begin position="92"/>
        <end position="102"/>
    </location>
</feature>
<feature type="strand" evidence="13">
    <location>
        <begin position="106"/>
        <end position="111"/>
    </location>
</feature>
<feature type="helix" evidence="13">
    <location>
        <begin position="116"/>
        <end position="123"/>
    </location>
</feature>
<feature type="strand" evidence="13">
    <location>
        <begin position="137"/>
        <end position="144"/>
    </location>
</feature>
<feature type="strand" evidence="8">
    <location>
        <begin position="148"/>
        <end position="151"/>
    </location>
</feature>
<feature type="strand" evidence="13">
    <location>
        <begin position="157"/>
        <end position="166"/>
    </location>
</feature>
<feature type="strand" evidence="13">
    <location>
        <begin position="168"/>
        <end position="174"/>
    </location>
</feature>
<feature type="strand" evidence="13">
    <location>
        <begin position="181"/>
        <end position="183"/>
    </location>
</feature>
<feature type="helix" evidence="13">
    <location>
        <begin position="187"/>
        <end position="201"/>
    </location>
</feature>
<feature type="strand" evidence="13">
    <location>
        <begin position="204"/>
        <end position="210"/>
    </location>
</feature>
<feature type="turn" evidence="13">
    <location>
        <begin position="211"/>
        <end position="214"/>
    </location>
</feature>
<feature type="helix" evidence="13">
    <location>
        <begin position="215"/>
        <end position="225"/>
    </location>
</feature>
<feature type="strand" evidence="10">
    <location>
        <begin position="233"/>
        <end position="236"/>
    </location>
</feature>
<feature type="strand" evidence="13">
    <location>
        <begin position="240"/>
        <end position="243"/>
    </location>
</feature>
<feature type="strand" evidence="13">
    <location>
        <begin position="245"/>
        <end position="251"/>
    </location>
</feature>
<feature type="strand" evidence="13">
    <location>
        <begin position="255"/>
        <end position="259"/>
    </location>
</feature>
<feature type="helix" evidence="13">
    <location>
        <begin position="260"/>
        <end position="265"/>
    </location>
</feature>
<feature type="helix" evidence="13">
    <location>
        <begin position="275"/>
        <end position="280"/>
    </location>
</feature>
<feature type="strand" evidence="13">
    <location>
        <begin position="283"/>
        <end position="285"/>
    </location>
</feature>
<feature type="helix" evidence="13">
    <location>
        <begin position="292"/>
        <end position="300"/>
    </location>
</feature>
<feature type="helix" evidence="13">
    <location>
        <begin position="305"/>
        <end position="337"/>
    </location>
</feature>
<feature type="helix" evidence="13">
    <location>
        <begin position="341"/>
        <end position="344"/>
    </location>
</feature>
<feature type="helix" evidence="13">
    <location>
        <begin position="349"/>
        <end position="363"/>
    </location>
</feature>
<feature type="helix" evidence="13">
    <location>
        <begin position="374"/>
        <end position="379"/>
    </location>
</feature>
<feature type="strand" evidence="13">
    <location>
        <begin position="395"/>
        <end position="405"/>
    </location>
</feature>
<feature type="helix" evidence="13">
    <location>
        <begin position="408"/>
        <end position="415"/>
    </location>
</feature>
<feature type="helix" evidence="13">
    <location>
        <begin position="420"/>
        <end position="422"/>
    </location>
</feature>
<feature type="strand" evidence="13">
    <location>
        <begin position="429"/>
        <end position="433"/>
    </location>
</feature>
<feature type="turn" evidence="13">
    <location>
        <begin position="435"/>
        <end position="437"/>
    </location>
</feature>
<feature type="strand" evidence="13">
    <location>
        <begin position="440"/>
        <end position="442"/>
    </location>
</feature>
<feature type="helix" evidence="13">
    <location>
        <begin position="448"/>
        <end position="469"/>
    </location>
</feature>
<feature type="helix" evidence="13">
    <location>
        <begin position="473"/>
        <end position="491"/>
    </location>
</feature>
<feature type="helix" evidence="13">
    <location>
        <begin position="493"/>
        <end position="498"/>
    </location>
</feature>
<feature type="helix" evidence="13">
    <location>
        <begin position="507"/>
        <end position="532"/>
    </location>
</feature>
<feature type="strand" evidence="13">
    <location>
        <begin position="535"/>
        <end position="540"/>
    </location>
</feature>
<feature type="strand" evidence="13">
    <location>
        <begin position="543"/>
        <end position="547"/>
    </location>
</feature>
<feature type="helix" evidence="13">
    <location>
        <begin position="553"/>
        <end position="568"/>
    </location>
</feature>
<feature type="strand" evidence="13">
    <location>
        <begin position="577"/>
        <end position="590"/>
    </location>
</feature>
<feature type="strand" evidence="13">
    <location>
        <begin position="593"/>
        <end position="598"/>
    </location>
</feature>
<feature type="strand" evidence="13">
    <location>
        <begin position="603"/>
        <end position="607"/>
    </location>
</feature>
<feature type="strand" evidence="13">
    <location>
        <begin position="613"/>
        <end position="616"/>
    </location>
</feature>
<feature type="helix" evidence="13">
    <location>
        <begin position="617"/>
        <end position="631"/>
    </location>
</feature>
<feature type="helix" evidence="13">
    <location>
        <begin position="636"/>
        <end position="651"/>
    </location>
</feature>
<feature type="turn" evidence="13">
    <location>
        <begin position="657"/>
        <end position="660"/>
    </location>
</feature>
<feature type="strand" evidence="13">
    <location>
        <begin position="662"/>
        <end position="668"/>
    </location>
</feature>
<feature type="helix" evidence="8">
    <location>
        <begin position="670"/>
        <end position="672"/>
    </location>
</feature>
<feature type="strand" evidence="13">
    <location>
        <begin position="673"/>
        <end position="677"/>
    </location>
</feature>
<feature type="helix" evidence="13">
    <location>
        <begin position="678"/>
        <end position="687"/>
    </location>
</feature>
<feature type="turn" evidence="13">
    <location>
        <begin position="688"/>
        <end position="690"/>
    </location>
</feature>
<feature type="strand" evidence="13">
    <location>
        <begin position="695"/>
        <end position="704"/>
    </location>
</feature>
<feature type="strand" evidence="13">
    <location>
        <begin position="707"/>
        <end position="709"/>
    </location>
</feature>
<feature type="helix" evidence="10">
    <location>
        <begin position="710"/>
        <end position="713"/>
    </location>
</feature>
<feature type="strand" evidence="12">
    <location>
        <begin position="714"/>
        <end position="716"/>
    </location>
</feature>
<feature type="turn" evidence="13">
    <location>
        <begin position="717"/>
        <end position="719"/>
    </location>
</feature>
<feature type="strand" evidence="13">
    <location>
        <begin position="722"/>
        <end position="724"/>
    </location>
</feature>
<feature type="helix" evidence="13">
    <location>
        <begin position="729"/>
        <end position="735"/>
    </location>
</feature>
<feature type="helix" evidence="13">
    <location>
        <begin position="737"/>
        <end position="746"/>
    </location>
</feature>
<feature type="turn" evidence="13">
    <location>
        <begin position="747"/>
        <end position="749"/>
    </location>
</feature>
<feature type="helix" evidence="13">
    <location>
        <begin position="752"/>
        <end position="755"/>
    </location>
</feature>
<feature type="strand" evidence="8">
    <location>
        <begin position="758"/>
        <end position="760"/>
    </location>
</feature>
<feature type="helix" evidence="9">
    <location>
        <begin position="766"/>
        <end position="769"/>
    </location>
</feature>
<proteinExistence type="evidence at protein level"/>
<name>DPOL_THEGO</name>
<comment type="function">
    <text>In addition to polymerase activity, this DNA polymerase exhibits 3' to 5' exonuclease activity.</text>
</comment>
<comment type="catalytic activity">
    <reaction>
        <text>DNA(n) + a 2'-deoxyribonucleoside 5'-triphosphate = DNA(n+1) + diphosphate</text>
        <dbReference type="Rhea" id="RHEA:22508"/>
        <dbReference type="Rhea" id="RHEA-COMP:17339"/>
        <dbReference type="Rhea" id="RHEA-COMP:17340"/>
        <dbReference type="ChEBI" id="CHEBI:33019"/>
        <dbReference type="ChEBI" id="CHEBI:61560"/>
        <dbReference type="ChEBI" id="CHEBI:173112"/>
        <dbReference type="EC" id="2.7.7.7"/>
    </reaction>
</comment>
<comment type="similarity">
    <text evidence="4">Belongs to the DNA polymerase type-B family.</text>
</comment>
<gene>
    <name type="primary">pol</name>
    <name type="synonym">polA</name>
</gene>
<accession>P56689</accession>
<sequence>MILDTDYITEDGKPVIRIFKKENGEFKIDYDRNFEPYIYALLKDDSAIEDVKKITAERHGTTVRVVRAEKVKKKFLGRPIEVWKLYFTHPQDVPAIRDKIKEHPAVVDIYEYDIPFAKRYLIDKGLIPMEGDEELKMLAFDIETLYHEGEEFAEGPILMISYADEEGARVITWKNIDLPYVDVVSTEKEMIKRFLKVVKEKDPDVLITYNGDNFDFAYLKKRSEKLGVKFILGREGSEPKIQRMGDRFAVEVKGRIHFDLYPVIRRTINLPTYTLEAVYEAIFGQPKEKVYAEEIAQAWETGEGLERVARYSMEDAKVTYELGKEFFPMEAQLSRLVGQSLWDVSRSSTGNLVEWFLLRKAYERNELAPNKPDERELARRRESYAGGYVKEPERGLWENIVYLDFRSLYPSIIITHNVSPDTLNREGCEEYDVAPQVGHKFCKDFPGFIPSLLGDLLEERQKVKKKMKATIDPIEKKLLDYRQRAIKILANSFYGYYGYAKARWYCKECAESVTAWGRQYIETTIREIEEKFGFKVLYADTDGFFATIPGADAETVKKKAKEFLDYINAKLPGLLELEYEGFYKRGFFVTKKKYAVIDEEDKITTRGLEIVRRDWSEIAKETQARVLEAILKHGDVEEAVRIVKEVTEKLSKYEVPPEKLVIYEQITRDLKDYKATGPHVAVAKRLAARGIKIRPGTVISYIVLKGSGRIGDRAIPFDEFDPAKHKYDAEYYIENQVLPAVERILRAFGYRKEDLRYQKTRQVGLGAWLKPKT</sequence>